<comment type="function">
    <text evidence="1 5 7 8">Component of the NuA4 histone acetyltransferase (HAT) complex, a multiprotein complex involved in transcriptional activation of select genes principally by acetylation of nucleosomal histones H4 and H2A (PubMed:14966270). The NuA4 complex plays a direct role in repair of DNA double-strand breaks (DSBs) by promoting homologous recombination (HR) (PubMed:27153538). The NuA4 complex is also required for spermatid development by promoting acetylation of histones: histone acetylation is required for histone replacement during the transition from round to elongating spermatids (By similarity). In the NuA4 complex, EPC1 is required to recruit MBTD1 into the complex (PubMed:32209463).</text>
</comment>
<comment type="subunit">
    <text evidence="3 4 5 7 8">Component of the NuA4 histone acetyltransferase complex which contains the catalytic subunit KAT5/TIP60 and the subunits EP400, TRRAP/PAF400, BRD8/SMAP, EPC1, DMAP1/DNMAP1, RUVBL1/TIP49, RUVBL2, ING3, actin, ACTL6A/BAF53A, MORF4L1/MRG15, MORF4L2/MRGX, MRGBP, YEATS4/GAS41, VPS72/YL1 and MEAF6 (PubMed:12963728, PubMed:14966270, PubMed:27153538, PubMed:32209463). KAT5/TIP60, EPC1, and ING3 together constitute a minimal HAT complex termed Piccolo NuA4 (PubMed:14966270). Component of a NuA4-related complex which contains EP400, TRRAP/PAF400, SRCAP, BRD8/SMAP, EPC1, DMAP1/DNMAP1, RUVBL1/TIP49, RUVBL2, actin, ACTL6A/BAF53A, VPS72 and YEATS4/GAS41 (PubMed:14966270). Interacts with TRIM27 (PubMed:10976108). Interacts with MBTD1; interaction is direct and promotes recruitment of MBTD1 into the NuA4 histone acetyltransferase complex (PubMed:32209463).</text>
</comment>
<comment type="interaction">
    <interactant intactId="EBI-769270">
        <id>Q9H2F5</id>
    </interactant>
    <interactant intactId="EBI-769266">
        <id>Q9H0E9</id>
        <label>BRD8</label>
    </interactant>
    <organismsDiffer>false</organismsDiffer>
    <experiments>5</experiments>
</comment>
<comment type="interaction">
    <interactant intactId="EBI-769270">
        <id>Q9H2F5</id>
    </interactant>
    <interactant intactId="EBI-739566">
        <id>P19012</id>
        <label>KRT15</label>
    </interactant>
    <organismsDiffer>false</organismsDiffer>
    <experiments>3</experiments>
</comment>
<comment type="interaction">
    <interactant intactId="EBI-769270">
        <id>Q9H2F5</id>
    </interactant>
    <interactant intactId="EBI-5666902">
        <id>Q05BQ5</id>
        <label>MBTD1</label>
    </interactant>
    <organismsDiffer>false</organismsDiffer>
    <experiments>6</experiments>
</comment>
<comment type="interaction">
    <interactant intactId="EBI-769270">
        <id>Q9H2F5</id>
    </interactant>
    <interactant intactId="EBI-726876">
        <id>Q6NUQ1</id>
        <label>RINT1</label>
    </interactant>
    <organismsDiffer>false</organismsDiffer>
    <experiments>5</experiments>
</comment>
<comment type="interaction">
    <interactant intactId="EBI-11023729">
        <id>Q9H2F5-2</id>
    </interactant>
    <interactant intactId="EBI-399080">
        <id>Q92993</id>
        <label>KAT5</label>
    </interactant>
    <organismsDiffer>false</organismsDiffer>
    <experiments>3</experiments>
</comment>
<comment type="subcellular location">
    <subcellularLocation>
        <location evidence="3">Nucleus</location>
    </subcellularLocation>
    <subcellularLocation>
        <location evidence="1">Cytoplasm</location>
    </subcellularLocation>
</comment>
<comment type="alternative products">
    <event type="alternative splicing"/>
    <isoform>
        <id>Q9H2F5-1</id>
        <name>1</name>
        <sequence type="displayed"/>
    </isoform>
    <isoform>
        <id>Q9H2F5-2</id>
        <name>2</name>
        <sequence type="described" ref="VSP_012877"/>
    </isoform>
    <isoform>
        <id>Q9H2F5-3</id>
        <name>3</name>
        <sequence type="described" ref="VSP_012875 VSP_012877"/>
    </isoform>
</comment>
<comment type="similarity">
    <text evidence="13">Belongs to the enhancer of polycomb family.</text>
</comment>
<comment type="sequence caution" evidence="13">
    <conflict type="erroneous initiation">
        <sequence resource="EMBL-CDS" id="BAB14888"/>
    </conflict>
    <text>Truncated N-terminus.</text>
</comment>
<comment type="sequence caution" evidence="13">
    <conflict type="miscellaneous discrepancy">
        <sequence resource="EMBL-CDS" id="BAC03857"/>
    </conflict>
    <text>Unlikely isoform. Aberrant splice sites.</text>
</comment>
<keyword id="KW-0002">3D-structure</keyword>
<keyword id="KW-0010">Activator</keyword>
<keyword id="KW-0025">Alternative splicing</keyword>
<keyword id="KW-0156">Chromatin regulator</keyword>
<keyword id="KW-0963">Cytoplasm</keyword>
<keyword id="KW-0221">Differentiation</keyword>
<keyword id="KW-0903">Direct protein sequencing</keyword>
<keyword id="KW-0341">Growth regulation</keyword>
<keyword id="KW-1017">Isopeptide bond</keyword>
<keyword id="KW-0539">Nucleus</keyword>
<keyword id="KW-0597">Phosphoprotein</keyword>
<keyword id="KW-1267">Proteomics identification</keyword>
<keyword id="KW-1185">Reference proteome</keyword>
<keyword id="KW-0744">Spermatogenesis</keyword>
<keyword id="KW-0804">Transcription</keyword>
<keyword id="KW-0805">Transcription regulation</keyword>
<keyword id="KW-0832">Ubl conjugation</keyword>
<reference key="1">
    <citation type="journal article" date="2000" name="J. Biol. Chem.">
        <title>RET finger protein is a transcriptional repressor and interacts with enhancer of polycomb that has dual transcriptional functions.</title>
        <authorList>
            <person name="Shimono Y."/>
            <person name="Murakami H."/>
            <person name="Hasegawa Y."/>
            <person name="Takahashi M."/>
        </authorList>
    </citation>
    <scope>NUCLEOTIDE SEQUENCE [MRNA] (ISOFORM 1)</scope>
    <scope>SUBCELLULAR LOCATION</scope>
    <scope>INTERACTION WITH TRIM27</scope>
</reference>
<reference key="2">
    <citation type="submission" date="2000-07" db="EMBL/GenBank/DDBJ databases">
        <title>Cloning and characterization of two human homologs of the enhancer of polycomb gene (EPC1) from Drosophila.</title>
        <authorList>
            <person name="Nunes D.N."/>
            <person name="Dias-Neto E."/>
            <person name="Brentani R.R."/>
            <person name="Camargo A.A."/>
        </authorList>
    </citation>
    <scope>NUCLEOTIDE SEQUENCE [MRNA] (ISOFORM 3)</scope>
</reference>
<reference key="3">
    <citation type="journal article" date="2004" name="Nat. Genet.">
        <title>Complete sequencing and characterization of 21,243 full-length human cDNAs.</title>
        <authorList>
            <person name="Ota T."/>
            <person name="Suzuki Y."/>
            <person name="Nishikawa T."/>
            <person name="Otsuki T."/>
            <person name="Sugiyama T."/>
            <person name="Irie R."/>
            <person name="Wakamatsu A."/>
            <person name="Hayashi K."/>
            <person name="Sato H."/>
            <person name="Nagai K."/>
            <person name="Kimura K."/>
            <person name="Makita H."/>
            <person name="Sekine M."/>
            <person name="Obayashi M."/>
            <person name="Nishi T."/>
            <person name="Shibahara T."/>
            <person name="Tanaka T."/>
            <person name="Ishii S."/>
            <person name="Yamamoto J."/>
            <person name="Saito K."/>
            <person name="Kawai Y."/>
            <person name="Isono Y."/>
            <person name="Nakamura Y."/>
            <person name="Nagahari K."/>
            <person name="Murakami K."/>
            <person name="Yasuda T."/>
            <person name="Iwayanagi T."/>
            <person name="Wagatsuma M."/>
            <person name="Shiratori A."/>
            <person name="Sudo H."/>
            <person name="Hosoiri T."/>
            <person name="Kaku Y."/>
            <person name="Kodaira H."/>
            <person name="Kondo H."/>
            <person name="Sugawara M."/>
            <person name="Takahashi M."/>
            <person name="Kanda K."/>
            <person name="Yokoi T."/>
            <person name="Furuya T."/>
            <person name="Kikkawa E."/>
            <person name="Omura Y."/>
            <person name="Abe K."/>
            <person name="Kamihara K."/>
            <person name="Katsuta N."/>
            <person name="Sato K."/>
            <person name="Tanikawa M."/>
            <person name="Yamazaki M."/>
            <person name="Ninomiya K."/>
            <person name="Ishibashi T."/>
            <person name="Yamashita H."/>
            <person name="Murakawa K."/>
            <person name="Fujimori K."/>
            <person name="Tanai H."/>
            <person name="Kimata M."/>
            <person name="Watanabe M."/>
            <person name="Hiraoka S."/>
            <person name="Chiba Y."/>
            <person name="Ishida S."/>
            <person name="Ono Y."/>
            <person name="Takiguchi S."/>
            <person name="Watanabe S."/>
            <person name="Yosida M."/>
            <person name="Hotuta T."/>
            <person name="Kusano J."/>
            <person name="Kanehori K."/>
            <person name="Takahashi-Fujii A."/>
            <person name="Hara H."/>
            <person name="Tanase T.-O."/>
            <person name="Nomura Y."/>
            <person name="Togiya S."/>
            <person name="Komai F."/>
            <person name="Hara R."/>
            <person name="Takeuchi K."/>
            <person name="Arita M."/>
            <person name="Imose N."/>
            <person name="Musashino K."/>
            <person name="Yuuki H."/>
            <person name="Oshima A."/>
            <person name="Sasaki N."/>
            <person name="Aotsuka S."/>
            <person name="Yoshikawa Y."/>
            <person name="Matsunawa H."/>
            <person name="Ichihara T."/>
            <person name="Shiohata N."/>
            <person name="Sano S."/>
            <person name="Moriya S."/>
            <person name="Momiyama H."/>
            <person name="Satoh N."/>
            <person name="Takami S."/>
            <person name="Terashima Y."/>
            <person name="Suzuki O."/>
            <person name="Nakagawa S."/>
            <person name="Senoh A."/>
            <person name="Mizoguchi H."/>
            <person name="Goto Y."/>
            <person name="Shimizu F."/>
            <person name="Wakebe H."/>
            <person name="Hishigaki H."/>
            <person name="Watanabe T."/>
            <person name="Sugiyama A."/>
            <person name="Takemoto M."/>
            <person name="Kawakami B."/>
            <person name="Yamazaki M."/>
            <person name="Watanabe K."/>
            <person name="Kumagai A."/>
            <person name="Itakura S."/>
            <person name="Fukuzumi Y."/>
            <person name="Fujimori Y."/>
            <person name="Komiyama M."/>
            <person name="Tashiro H."/>
            <person name="Tanigami A."/>
            <person name="Fujiwara T."/>
            <person name="Ono T."/>
            <person name="Yamada K."/>
            <person name="Fujii Y."/>
            <person name="Ozaki K."/>
            <person name="Hirao M."/>
            <person name="Ohmori Y."/>
            <person name="Kawabata A."/>
            <person name="Hikiji T."/>
            <person name="Kobatake N."/>
            <person name="Inagaki H."/>
            <person name="Ikema Y."/>
            <person name="Okamoto S."/>
            <person name="Okitani R."/>
            <person name="Kawakami T."/>
            <person name="Noguchi S."/>
            <person name="Itoh T."/>
            <person name="Shigeta K."/>
            <person name="Senba T."/>
            <person name="Matsumura K."/>
            <person name="Nakajima Y."/>
            <person name="Mizuno T."/>
            <person name="Morinaga M."/>
            <person name="Sasaki M."/>
            <person name="Togashi T."/>
            <person name="Oyama M."/>
            <person name="Hata H."/>
            <person name="Watanabe M."/>
            <person name="Komatsu T."/>
            <person name="Mizushima-Sugano J."/>
            <person name="Satoh T."/>
            <person name="Shirai Y."/>
            <person name="Takahashi Y."/>
            <person name="Nakagawa K."/>
            <person name="Okumura K."/>
            <person name="Nagase T."/>
            <person name="Nomura N."/>
            <person name="Kikuchi H."/>
            <person name="Masuho Y."/>
            <person name="Yamashita R."/>
            <person name="Nakai K."/>
            <person name="Yada T."/>
            <person name="Nakamura Y."/>
            <person name="Ohara O."/>
            <person name="Isogai T."/>
            <person name="Sugano S."/>
        </authorList>
    </citation>
    <scope>NUCLEOTIDE SEQUENCE [LARGE SCALE MRNA] (ISOFORMS 2 AND 3)</scope>
    <source>
        <tissue>Brain</tissue>
        <tissue>Placenta</tissue>
    </source>
</reference>
<reference key="4">
    <citation type="journal article" date="2004" name="Nature">
        <title>The DNA sequence and comparative analysis of human chromosome 10.</title>
        <authorList>
            <person name="Deloukas P."/>
            <person name="Earthrowl M.E."/>
            <person name="Grafham D.V."/>
            <person name="Rubenfield M."/>
            <person name="French L."/>
            <person name="Steward C.A."/>
            <person name="Sims S.K."/>
            <person name="Jones M.C."/>
            <person name="Searle S."/>
            <person name="Scott C."/>
            <person name="Howe K."/>
            <person name="Hunt S.E."/>
            <person name="Andrews T.D."/>
            <person name="Gilbert J.G.R."/>
            <person name="Swarbreck D."/>
            <person name="Ashurst J.L."/>
            <person name="Taylor A."/>
            <person name="Battles J."/>
            <person name="Bird C.P."/>
            <person name="Ainscough R."/>
            <person name="Almeida J.P."/>
            <person name="Ashwell R.I.S."/>
            <person name="Ambrose K.D."/>
            <person name="Babbage A.K."/>
            <person name="Bagguley C.L."/>
            <person name="Bailey J."/>
            <person name="Banerjee R."/>
            <person name="Bates K."/>
            <person name="Beasley H."/>
            <person name="Bray-Allen S."/>
            <person name="Brown A.J."/>
            <person name="Brown J.Y."/>
            <person name="Burford D.C."/>
            <person name="Burrill W."/>
            <person name="Burton J."/>
            <person name="Cahill P."/>
            <person name="Camire D."/>
            <person name="Carter N.P."/>
            <person name="Chapman J.C."/>
            <person name="Clark S.Y."/>
            <person name="Clarke G."/>
            <person name="Clee C.M."/>
            <person name="Clegg S."/>
            <person name="Corby N."/>
            <person name="Coulson A."/>
            <person name="Dhami P."/>
            <person name="Dutta I."/>
            <person name="Dunn M."/>
            <person name="Faulkner L."/>
            <person name="Frankish A."/>
            <person name="Frankland J.A."/>
            <person name="Garner P."/>
            <person name="Garnett J."/>
            <person name="Gribble S."/>
            <person name="Griffiths C."/>
            <person name="Grocock R."/>
            <person name="Gustafson E."/>
            <person name="Hammond S."/>
            <person name="Harley J.L."/>
            <person name="Hart E."/>
            <person name="Heath P.D."/>
            <person name="Ho T.P."/>
            <person name="Hopkins B."/>
            <person name="Horne J."/>
            <person name="Howden P.J."/>
            <person name="Huckle E."/>
            <person name="Hynds C."/>
            <person name="Johnson C."/>
            <person name="Johnson D."/>
            <person name="Kana A."/>
            <person name="Kay M."/>
            <person name="Kimberley A.M."/>
            <person name="Kershaw J.K."/>
            <person name="Kokkinaki M."/>
            <person name="Laird G.K."/>
            <person name="Lawlor S."/>
            <person name="Lee H.M."/>
            <person name="Leongamornlert D.A."/>
            <person name="Laird G."/>
            <person name="Lloyd C."/>
            <person name="Lloyd D.M."/>
            <person name="Loveland J."/>
            <person name="Lovell J."/>
            <person name="McLaren S."/>
            <person name="McLay K.E."/>
            <person name="McMurray A."/>
            <person name="Mashreghi-Mohammadi M."/>
            <person name="Matthews L."/>
            <person name="Milne S."/>
            <person name="Nickerson T."/>
            <person name="Nguyen M."/>
            <person name="Overton-Larty E."/>
            <person name="Palmer S.A."/>
            <person name="Pearce A.V."/>
            <person name="Peck A.I."/>
            <person name="Pelan S."/>
            <person name="Phillimore B."/>
            <person name="Porter K."/>
            <person name="Rice C.M."/>
            <person name="Rogosin A."/>
            <person name="Ross M.T."/>
            <person name="Sarafidou T."/>
            <person name="Sehra H.K."/>
            <person name="Shownkeen R."/>
            <person name="Skuce C.D."/>
            <person name="Smith M."/>
            <person name="Standring L."/>
            <person name="Sycamore N."/>
            <person name="Tester J."/>
            <person name="Thorpe A."/>
            <person name="Torcasso W."/>
            <person name="Tracey A."/>
            <person name="Tromans A."/>
            <person name="Tsolas J."/>
            <person name="Wall M."/>
            <person name="Walsh J."/>
            <person name="Wang H."/>
            <person name="Weinstock K."/>
            <person name="West A.P."/>
            <person name="Willey D.L."/>
            <person name="Whitehead S.L."/>
            <person name="Wilming L."/>
            <person name="Wray P.W."/>
            <person name="Young L."/>
            <person name="Chen Y."/>
            <person name="Lovering R.C."/>
            <person name="Moschonas N.K."/>
            <person name="Siebert R."/>
            <person name="Fechtel K."/>
            <person name="Bentley D."/>
            <person name="Durbin R.M."/>
            <person name="Hubbard T."/>
            <person name="Doucette-Stamm L."/>
            <person name="Beck S."/>
            <person name="Smith D.R."/>
            <person name="Rogers J."/>
        </authorList>
    </citation>
    <scope>NUCLEOTIDE SEQUENCE [LARGE SCALE GENOMIC DNA]</scope>
</reference>
<reference key="5">
    <citation type="submission" date="2005-09" db="EMBL/GenBank/DDBJ databases">
        <authorList>
            <person name="Mural R.J."/>
            <person name="Istrail S."/>
            <person name="Sutton G.G."/>
            <person name="Florea L."/>
            <person name="Halpern A.L."/>
            <person name="Mobarry C.M."/>
            <person name="Lippert R."/>
            <person name="Walenz B."/>
            <person name="Shatkay H."/>
            <person name="Dew I."/>
            <person name="Miller J.R."/>
            <person name="Flanigan M.J."/>
            <person name="Edwards N.J."/>
            <person name="Bolanos R."/>
            <person name="Fasulo D."/>
            <person name="Halldorsson B.V."/>
            <person name="Hannenhalli S."/>
            <person name="Turner R."/>
            <person name="Yooseph S."/>
            <person name="Lu F."/>
            <person name="Nusskern D.R."/>
            <person name="Shue B.C."/>
            <person name="Zheng X.H."/>
            <person name="Zhong F."/>
            <person name="Delcher A.L."/>
            <person name="Huson D.H."/>
            <person name="Kravitz S.A."/>
            <person name="Mouchard L."/>
            <person name="Reinert K."/>
            <person name="Remington K.A."/>
            <person name="Clark A.G."/>
            <person name="Waterman M.S."/>
            <person name="Eichler E.E."/>
            <person name="Adams M.D."/>
            <person name="Hunkapiller M.W."/>
            <person name="Myers E.W."/>
            <person name="Venter J.C."/>
        </authorList>
    </citation>
    <scope>NUCLEOTIDE SEQUENCE [LARGE SCALE GENOMIC DNA]</scope>
</reference>
<reference key="6">
    <citation type="journal article" date="2004" name="Genome Res.">
        <title>The status, quality, and expansion of the NIH full-length cDNA project: the Mammalian Gene Collection (MGC).</title>
        <authorList>
            <consortium name="The MGC Project Team"/>
        </authorList>
    </citation>
    <scope>NUCLEOTIDE SEQUENCE [LARGE SCALE MRNA] (ISOFORM 2)</scope>
    <source>
        <tissue>Testis</tissue>
    </source>
</reference>
<reference key="7">
    <citation type="journal article" date="2003" name="J. Biol. Chem.">
        <title>Identification of new subunits of the multiprotein mammalian TRRAP/TIP60-containing histone acetyltransferase complex.</title>
        <authorList>
            <person name="Cai Y."/>
            <person name="Jin J."/>
            <person name="Tomomori-Sato C."/>
            <person name="Sato S."/>
            <person name="Sorokina I."/>
            <person name="Parmely T.J."/>
            <person name="Conaway R.C."/>
            <person name="Conaway J.W."/>
        </authorList>
    </citation>
    <scope>PROTEIN SEQUENCE OF 58-68 AND 802-813</scope>
    <scope>IDENTIFICATION IN NUA4 COMPLEX</scope>
    <scope>IDENTIFICATION BY MASS SPECTROMETRY</scope>
</reference>
<reference key="8">
    <citation type="journal article" date="2004" name="Curr. Opin. Genet. Dev.">
        <title>The highly conserved and multifunctional NuA4 HAT complex.</title>
        <authorList>
            <person name="Doyon Y."/>
            <person name="Cote J."/>
        </authorList>
    </citation>
    <scope>REVIEW ON NUA4 COMPLEX</scope>
</reference>
<reference key="9">
    <citation type="journal article" date="2004" name="Mol. Cell. Biol.">
        <title>Structural and functional conservation of the NuA4 histone acetyltransferase complex from yeast to humans.</title>
        <authorList>
            <person name="Doyon Y."/>
            <person name="Selleck W."/>
            <person name="Lane W.S."/>
            <person name="Tan S."/>
            <person name="Cote J."/>
        </authorList>
    </citation>
    <scope>FUNCTION</scope>
    <scope>IDENTIFICATION BY MASS SPECTROMETRY</scope>
    <scope>IDENTIFICATION IN NUA4 COMPLEX</scope>
    <scope>IDENTIFICATION IN A NUA4-RELATED SRCAP-CONTAINING COMPLEX</scope>
</reference>
<reference key="10">
    <citation type="journal article" date="2008" name="Proc. Natl. Acad. Sci. U.S.A.">
        <title>A quantitative atlas of mitotic phosphorylation.</title>
        <authorList>
            <person name="Dephoure N."/>
            <person name="Zhou C."/>
            <person name="Villen J."/>
            <person name="Beausoleil S.A."/>
            <person name="Bakalarski C.E."/>
            <person name="Elledge S.J."/>
            <person name="Gygi S.P."/>
        </authorList>
    </citation>
    <scope>IDENTIFICATION BY MASS SPECTROMETRY [LARGE SCALE ANALYSIS]</scope>
    <source>
        <tissue>Cervix carcinoma</tissue>
    </source>
</reference>
<reference key="11">
    <citation type="journal article" date="2009" name="Anal. Chem.">
        <title>Lys-N and trypsin cover complementary parts of the phosphoproteome in a refined SCX-based approach.</title>
        <authorList>
            <person name="Gauci S."/>
            <person name="Helbig A.O."/>
            <person name="Slijper M."/>
            <person name="Krijgsveld J."/>
            <person name="Heck A.J."/>
            <person name="Mohammed S."/>
        </authorList>
    </citation>
    <scope>IDENTIFICATION BY MASS SPECTROMETRY [LARGE SCALE ANALYSIS]</scope>
</reference>
<reference key="12">
    <citation type="journal article" date="2013" name="J. Proteome Res.">
        <title>Toward a comprehensive characterization of a human cancer cell phosphoproteome.</title>
        <authorList>
            <person name="Zhou H."/>
            <person name="Di Palma S."/>
            <person name="Preisinger C."/>
            <person name="Peng M."/>
            <person name="Polat A.N."/>
            <person name="Heck A.J."/>
            <person name="Mohammed S."/>
        </authorList>
    </citation>
    <scope>PHOSPHORYLATION [LARGE SCALE ANALYSIS] AT SER-539</scope>
    <scope>IDENTIFICATION BY MASS SPECTROMETRY [LARGE SCALE ANALYSIS]</scope>
    <source>
        <tissue>Erythroleukemia</tissue>
    </source>
</reference>
<reference key="13">
    <citation type="journal article" date="2016" name="Mol. Cell">
        <title>The TIP60 complex regulates bivalent chromatin recognition by 53BP1 through direct H4K20me binding and H2AK15 acetylation.</title>
        <authorList>
            <person name="Jacquet K."/>
            <person name="Fradet-Turcotte A."/>
            <person name="Avvakumov N."/>
            <person name="Lambert J.P."/>
            <person name="Roques C."/>
            <person name="Pandita R.K."/>
            <person name="Paquet E."/>
            <person name="Herst P."/>
            <person name="Gingras A.C."/>
            <person name="Pandita T.K."/>
            <person name="Legube G."/>
            <person name="Doyon Y."/>
            <person name="Durocher D."/>
            <person name="Cote J."/>
        </authorList>
    </citation>
    <scope>IDENTIFICATION IN NUA4 COMPLEX</scope>
</reference>
<reference key="14">
    <citation type="journal article" date="2017" name="Nat. Struct. Mol. Biol.">
        <title>Site-specific mapping of the human SUMO proteome reveals co-modification with phosphorylation.</title>
        <authorList>
            <person name="Hendriks I.A."/>
            <person name="Lyon D."/>
            <person name="Young C."/>
            <person name="Jensen L.J."/>
            <person name="Vertegaal A.C."/>
            <person name="Nielsen M.L."/>
        </authorList>
    </citation>
    <scope>SUMOYLATION [LARGE SCALE ANALYSIS] AT LYS-319 AND LYS-673</scope>
    <scope>IDENTIFICATION BY MASS SPECTROMETRY [LARGE SCALE ANALYSIS]</scope>
</reference>
<reference evidence="15" key="15">
    <citation type="journal article" date="2020" name="Cell Rep.">
        <title>Structural basis for EPC1-mediated recruitment of MBTD1 into the NuA4/TIP60 acetyltransferase complex.</title>
        <authorList>
            <person name="Zhang H."/>
            <person name="Devoucoux M."/>
            <person name="Song X."/>
            <person name="Li L."/>
            <person name="Ayaz G."/>
            <person name="Cheng H."/>
            <person name="Tempel W."/>
            <person name="Dong C."/>
            <person name="Loppnau P."/>
            <person name="Cote J."/>
            <person name="Min J."/>
        </authorList>
    </citation>
    <scope>X-RAY CRYSTALLOGRAPHY (1.95 ANGSTROMS) OF 644-671 IN COMPLEX WITH MBTD1</scope>
    <scope>FUNCTION</scope>
    <scope>IDENTIFICATION IN NUA4 COMPLEX</scope>
    <scope>INTERACTION WITH MBTD1</scope>
    <scope>MUTAGENESIS OF LEU-651 AND 659-ALA--LEU-663</scope>
</reference>
<reference key="16">
    <citation type="journal article" date="2015" name="Proc. Natl. Acad. Sci. U.S.A.">
        <title>Neomorphic effects of recurrent somatic mutations in Yin Yang 1 in insulin-producing adenomas.</title>
        <authorList>
            <person name="Cromer M.K."/>
            <person name="Choi M."/>
            <person name="Nelson-Williams C."/>
            <person name="Fonseca A.L."/>
            <person name="Kunstman J.W."/>
            <person name="Korah R.M."/>
            <person name="Overton J.D."/>
            <person name="Mane S."/>
            <person name="Kenney B."/>
            <person name="Malchoff C.D."/>
            <person name="Stalberg P."/>
            <person name="Akerstroem G."/>
            <person name="Westin G."/>
            <person name="Hellman P."/>
            <person name="Carling T."/>
            <person name="Bjoerklund P."/>
            <person name="Lifton R.P."/>
        </authorList>
    </citation>
    <scope>VARIANT LEU-123</scope>
</reference>
<accession>Q9H2F5</accession>
<accession>B4DSC3</accession>
<accession>D3DRX7</accession>
<accession>Q5VW54</accession>
<accession>Q5VW56</accession>
<accession>Q5VW58</accession>
<accession>Q8NAQ4</accession>
<accession>Q8NE21</accession>
<accession>Q96LF4</accession>
<accession>Q96RR6</accession>
<accession>Q9H7T7</accession>
<gene>
    <name evidence="9 14" type="primary">EPC1</name>
</gene>
<organism>
    <name type="scientific">Homo sapiens</name>
    <name type="common">Human</name>
    <dbReference type="NCBI Taxonomy" id="9606"/>
    <lineage>
        <taxon>Eukaryota</taxon>
        <taxon>Metazoa</taxon>
        <taxon>Chordata</taxon>
        <taxon>Craniata</taxon>
        <taxon>Vertebrata</taxon>
        <taxon>Euteleostomi</taxon>
        <taxon>Mammalia</taxon>
        <taxon>Eutheria</taxon>
        <taxon>Euarchontoglires</taxon>
        <taxon>Primates</taxon>
        <taxon>Haplorrhini</taxon>
        <taxon>Catarrhini</taxon>
        <taxon>Hominidae</taxon>
        <taxon>Homo</taxon>
    </lineage>
</organism>
<name>EPC1_HUMAN</name>
<protein>
    <recommendedName>
        <fullName evidence="13">Enhancer of polycomb homolog 1</fullName>
    </recommendedName>
</protein>
<evidence type="ECO:0000250" key="1">
    <source>
        <dbReference type="UniProtKB" id="Q8C9X6"/>
    </source>
</evidence>
<evidence type="ECO:0000256" key="2">
    <source>
        <dbReference type="SAM" id="MobiDB-lite"/>
    </source>
</evidence>
<evidence type="ECO:0000269" key="3">
    <source>
    </source>
</evidence>
<evidence type="ECO:0000269" key="4">
    <source>
    </source>
</evidence>
<evidence type="ECO:0000269" key="5">
    <source>
    </source>
</evidence>
<evidence type="ECO:0000269" key="6">
    <source>
    </source>
</evidence>
<evidence type="ECO:0000269" key="7">
    <source>
    </source>
</evidence>
<evidence type="ECO:0000269" key="8">
    <source>
    </source>
</evidence>
<evidence type="ECO:0000303" key="9">
    <source>
    </source>
</evidence>
<evidence type="ECO:0000303" key="10">
    <source>
    </source>
</evidence>
<evidence type="ECO:0000303" key="11">
    <source>
    </source>
</evidence>
<evidence type="ECO:0000303" key="12">
    <source ref="2"/>
</evidence>
<evidence type="ECO:0000305" key="13"/>
<evidence type="ECO:0000312" key="14">
    <source>
        <dbReference type="HGNC" id="HGNC:19876"/>
    </source>
</evidence>
<evidence type="ECO:0007744" key="15">
    <source>
        <dbReference type="PDB" id="6NFX"/>
    </source>
</evidence>
<evidence type="ECO:0007744" key="16">
    <source>
    </source>
</evidence>
<evidence type="ECO:0007744" key="17">
    <source>
    </source>
</evidence>
<evidence type="ECO:0007829" key="18">
    <source>
        <dbReference type="PDB" id="6NFX"/>
    </source>
</evidence>
<evidence type="ECO:0007829" key="19">
    <source>
        <dbReference type="PDB" id="8XVT"/>
    </source>
</evidence>
<evidence type="ECO:0007829" key="20">
    <source>
        <dbReference type="PDB" id="9C57"/>
    </source>
</evidence>
<feature type="chain" id="PRO_0000214153" description="Enhancer of polycomb homolog 1">
    <location>
        <begin position="1"/>
        <end position="836"/>
    </location>
</feature>
<feature type="region of interest" description="Disordered" evidence="2">
    <location>
        <begin position="335"/>
        <end position="360"/>
    </location>
</feature>
<feature type="region of interest" description="Disordered" evidence="2">
    <location>
        <begin position="372"/>
        <end position="401"/>
    </location>
</feature>
<feature type="region of interest" description="Disordered" evidence="2">
    <location>
        <begin position="802"/>
        <end position="829"/>
    </location>
</feature>
<feature type="compositionally biased region" description="Low complexity" evidence="2">
    <location>
        <begin position="346"/>
        <end position="360"/>
    </location>
</feature>
<feature type="compositionally biased region" description="Basic and acidic residues" evidence="2">
    <location>
        <begin position="811"/>
        <end position="820"/>
    </location>
</feature>
<feature type="modified residue" description="Phosphoserine" evidence="16">
    <location>
        <position position="539"/>
    </location>
</feature>
<feature type="cross-link" description="Glycyl lysine isopeptide (Lys-Gly) (interchain with G-Cter in SUMO2)" evidence="17">
    <location>
        <position position="319"/>
    </location>
</feature>
<feature type="cross-link" description="Glycyl lysine isopeptide (Lys-Gly) (interchain with G-Cter in SUMO2)" evidence="17">
    <location>
        <position position="673"/>
    </location>
</feature>
<feature type="splice variant" id="VSP_012875" description="In isoform 3." evidence="10 12">
    <original>MSKLSFRARALDASKPLPVFRCEDLPDLHEYASINRAVPQMPTGMEKEEES</original>
    <variation>M</variation>
    <location>
        <begin position="1"/>
        <end position="51"/>
    </location>
</feature>
<feature type="splice variant" id="VSP_012877" description="In isoform 2 and isoform 3." evidence="10 11 12">
    <location>
        <begin position="621"/>
        <end position="643"/>
    </location>
</feature>
<feature type="sequence variant" id="VAR_074181" evidence="6">
    <original>V</original>
    <variation>L</variation>
    <location>
        <position position="123"/>
    </location>
</feature>
<feature type="mutagenesis site" description="Abolished interaction with MBTD1; when associated with D-660--663-D." evidence="8">
    <original>L</original>
    <variation>D</variation>
    <location>
        <position position="651"/>
    </location>
</feature>
<feature type="mutagenesis site" description="Abolished interaction with MBTD1; when associated with D-651." evidence="8">
    <original>AASAL</original>
    <variation>DASAD</variation>
    <location>
        <begin position="659"/>
        <end position="663"/>
    </location>
</feature>
<feature type="sequence conflict" description="In Ref. 2; AAK60501." evidence="13" ref="2">
    <original>S</original>
    <variation>G</variation>
    <location>
        <position position="156"/>
    </location>
</feature>
<feature type="sequence conflict" description="In Ref. 2; AAK60501." evidence="13" ref="2">
    <original>K</original>
    <variation>R</variation>
    <location>
        <position position="256"/>
    </location>
</feature>
<feature type="sequence conflict" description="In Ref. 6; AAH36529." evidence="13" ref="6">
    <original>A</original>
    <variation>V</variation>
    <location>
        <position position="783"/>
    </location>
</feature>
<feature type="sequence conflict" description="In Ref. 3; BAC03857." evidence="13" ref="3">
    <original>N</original>
    <variation>S</variation>
    <location>
        <position position="825"/>
    </location>
</feature>
<feature type="strand" evidence="19">
    <location>
        <begin position="412"/>
        <end position="415"/>
    </location>
</feature>
<feature type="turn" evidence="19">
    <location>
        <begin position="428"/>
        <end position="430"/>
    </location>
</feature>
<feature type="strand" evidence="19">
    <location>
        <begin position="431"/>
        <end position="433"/>
    </location>
</feature>
<feature type="helix" evidence="19">
    <location>
        <begin position="436"/>
        <end position="438"/>
    </location>
</feature>
<feature type="strand" evidence="20">
    <location>
        <begin position="441"/>
        <end position="444"/>
    </location>
</feature>
<feature type="strand" evidence="19">
    <location>
        <begin position="446"/>
        <end position="448"/>
    </location>
</feature>
<feature type="strand" evidence="20">
    <location>
        <begin position="450"/>
        <end position="455"/>
    </location>
</feature>
<feature type="strand" evidence="20">
    <location>
        <begin position="457"/>
        <end position="459"/>
    </location>
</feature>
<feature type="helix" evidence="19">
    <location>
        <begin position="461"/>
        <end position="463"/>
    </location>
</feature>
<feature type="strand" evidence="20">
    <location>
        <begin position="465"/>
        <end position="467"/>
    </location>
</feature>
<feature type="helix" evidence="20">
    <location>
        <begin position="475"/>
        <end position="478"/>
    </location>
</feature>
<feature type="helix" evidence="19">
    <location>
        <begin position="482"/>
        <end position="485"/>
    </location>
</feature>
<feature type="helix" evidence="19">
    <location>
        <begin position="515"/>
        <end position="518"/>
    </location>
</feature>
<feature type="helix" evidence="18">
    <location>
        <begin position="653"/>
        <end position="660"/>
    </location>
</feature>
<dbReference type="EMBL" id="AF277374">
    <property type="protein sequence ID" value="AAG41402.1"/>
    <property type="molecule type" value="mRNA"/>
</dbReference>
<dbReference type="EMBL" id="AF286905">
    <property type="protein sequence ID" value="AAK60501.1"/>
    <property type="molecule type" value="mRNA"/>
</dbReference>
<dbReference type="EMBL" id="AK024329">
    <property type="protein sequence ID" value="BAB14888.1"/>
    <property type="status" value="ALT_INIT"/>
    <property type="molecule type" value="mRNA"/>
</dbReference>
<dbReference type="EMBL" id="AK092304">
    <property type="protein sequence ID" value="BAC03857.1"/>
    <property type="status" value="ALT_SEQ"/>
    <property type="molecule type" value="mRNA"/>
</dbReference>
<dbReference type="EMBL" id="AK299676">
    <property type="protein sequence ID" value="BAG61585.1"/>
    <property type="molecule type" value="mRNA"/>
</dbReference>
<dbReference type="EMBL" id="AL158834">
    <property type="status" value="NOT_ANNOTATED_CDS"/>
    <property type="molecule type" value="Genomic_DNA"/>
</dbReference>
<dbReference type="EMBL" id="AL391839">
    <property type="status" value="NOT_ANNOTATED_CDS"/>
    <property type="molecule type" value="Genomic_DNA"/>
</dbReference>
<dbReference type="EMBL" id="CH471072">
    <property type="protein sequence ID" value="EAW85972.1"/>
    <property type="molecule type" value="Genomic_DNA"/>
</dbReference>
<dbReference type="EMBL" id="CH471072">
    <property type="protein sequence ID" value="EAW85973.1"/>
    <property type="molecule type" value="Genomic_DNA"/>
</dbReference>
<dbReference type="EMBL" id="BC036529">
    <property type="protein sequence ID" value="AAH36529.1"/>
    <property type="molecule type" value="mRNA"/>
</dbReference>
<dbReference type="CCDS" id="CCDS60511.1">
    <molecule id="Q9H2F5-2"/>
</dbReference>
<dbReference type="CCDS" id="CCDS7172.1">
    <molecule id="Q9H2F5-1"/>
</dbReference>
<dbReference type="CCDS" id="CCDS73083.1">
    <molecule id="Q9H2F5-3"/>
</dbReference>
<dbReference type="RefSeq" id="NP_001258933.1">
    <molecule id="Q9H2F5-2"/>
    <property type="nucleotide sequence ID" value="NM_001272004.3"/>
</dbReference>
<dbReference type="RefSeq" id="NP_001258948.1">
    <property type="nucleotide sequence ID" value="NM_001272019.2"/>
</dbReference>
<dbReference type="RefSeq" id="NP_001269320.1">
    <molecule id="Q9H2F5-3"/>
    <property type="nucleotide sequence ID" value="NM_001282391.3"/>
</dbReference>
<dbReference type="RefSeq" id="NP_079485.1">
    <molecule id="Q9H2F5-1"/>
    <property type="nucleotide sequence ID" value="NM_025209.5"/>
</dbReference>
<dbReference type="PDB" id="6NFX">
    <property type="method" value="X-ray"/>
    <property type="resolution" value="1.95 A"/>
    <property type="chains" value="A=644-671"/>
</dbReference>
<dbReference type="PDB" id="8QR1">
    <property type="method" value="EM"/>
    <property type="resolution" value="2.40 A"/>
    <property type="chains" value="C=1-836"/>
</dbReference>
<dbReference type="PDB" id="8XVG">
    <property type="method" value="EM"/>
    <property type="resolution" value="9.40 A"/>
    <property type="chains" value="M=1-836"/>
</dbReference>
<dbReference type="PDB" id="8XVT">
    <property type="method" value="EM"/>
    <property type="resolution" value="3.20 A"/>
    <property type="chains" value="M=1-836"/>
</dbReference>
<dbReference type="PDB" id="9C57">
    <property type="method" value="EM"/>
    <property type="resolution" value="2.75 A"/>
    <property type="chains" value="H=1-836"/>
</dbReference>
<dbReference type="PDB" id="9C62">
    <property type="method" value="EM"/>
    <property type="resolution" value="5.28 A"/>
    <property type="chains" value="H=1-836"/>
</dbReference>
<dbReference type="PDB" id="9C6N">
    <property type="method" value="EM"/>
    <property type="resolution" value="3.29 A"/>
    <property type="chains" value="H=1-836"/>
</dbReference>
<dbReference type="PDBsum" id="6NFX"/>
<dbReference type="PDBsum" id="8QR1"/>
<dbReference type="PDBsum" id="8XVG"/>
<dbReference type="PDBsum" id="8XVT"/>
<dbReference type="PDBsum" id="9C57"/>
<dbReference type="PDBsum" id="9C62"/>
<dbReference type="PDBsum" id="9C6N"/>
<dbReference type="EMDB" id="EMD-18581"/>
<dbReference type="EMDB" id="EMD-18591"/>
<dbReference type="EMDB" id="EMD-18597"/>
<dbReference type="EMDB" id="EMD-18598"/>
<dbReference type="EMDB" id="EMD-18611"/>
<dbReference type="EMDB" id="EMD-18794"/>
<dbReference type="EMDB" id="EMD-38703"/>
<dbReference type="EMDB" id="EMD-38718"/>
<dbReference type="EMDB" id="EMD-45206"/>
<dbReference type="EMDB" id="EMD-45240"/>
<dbReference type="EMDB" id="EMD-45252"/>
<dbReference type="SMR" id="Q9H2F5"/>
<dbReference type="BioGRID" id="123227">
    <property type="interactions" value="81"/>
</dbReference>
<dbReference type="ComplexPortal" id="CPX-709">
    <property type="entry name" value="Piccolo NuA4 histone acetyltransferase complex"/>
</dbReference>
<dbReference type="ComplexPortal" id="CPX-978">
    <property type="entry name" value="NuA4 histone acetyltransferase complex"/>
</dbReference>
<dbReference type="CORUM" id="Q9H2F5"/>
<dbReference type="FunCoup" id="Q9H2F5">
    <property type="interactions" value="2772"/>
</dbReference>
<dbReference type="IntAct" id="Q9H2F5">
    <property type="interactions" value="67"/>
</dbReference>
<dbReference type="MINT" id="Q9H2F5"/>
<dbReference type="STRING" id="9606.ENSP00000263062"/>
<dbReference type="GlyCosmos" id="Q9H2F5">
    <property type="glycosylation" value="3 sites, 1 glycan"/>
</dbReference>
<dbReference type="GlyGen" id="Q9H2F5">
    <property type="glycosylation" value="6 sites, 1 O-linked glycan (6 sites)"/>
</dbReference>
<dbReference type="iPTMnet" id="Q9H2F5"/>
<dbReference type="PhosphoSitePlus" id="Q9H2F5"/>
<dbReference type="SwissPalm" id="Q9H2F5"/>
<dbReference type="BioMuta" id="EPC1"/>
<dbReference type="DMDM" id="59797889"/>
<dbReference type="jPOST" id="Q9H2F5"/>
<dbReference type="MassIVE" id="Q9H2F5"/>
<dbReference type="PaxDb" id="9606-ENSP00000263062"/>
<dbReference type="PeptideAtlas" id="Q9H2F5"/>
<dbReference type="ProteomicsDB" id="80540">
    <molecule id="Q9H2F5-1"/>
</dbReference>
<dbReference type="ProteomicsDB" id="80541">
    <molecule id="Q9H2F5-2"/>
</dbReference>
<dbReference type="ProteomicsDB" id="80542">
    <molecule id="Q9H2F5-3"/>
</dbReference>
<dbReference type="Pumba" id="Q9H2F5"/>
<dbReference type="Antibodypedia" id="26401">
    <property type="antibodies" value="93 antibodies from 21 providers"/>
</dbReference>
<dbReference type="DNASU" id="80314"/>
<dbReference type="Ensembl" id="ENST00000263062.8">
    <molecule id="Q9H2F5-1"/>
    <property type="protein sequence ID" value="ENSP00000263062.8"/>
    <property type="gene ID" value="ENSG00000120616.16"/>
</dbReference>
<dbReference type="Ensembl" id="ENST00000319778.11">
    <molecule id="Q9H2F5-2"/>
    <property type="protein sequence ID" value="ENSP00000318559.6"/>
    <property type="gene ID" value="ENSG00000120616.16"/>
</dbReference>
<dbReference type="Ensembl" id="ENST00000375110.6">
    <molecule id="Q9H2F5-3"/>
    <property type="protein sequence ID" value="ENSP00000364251.2"/>
    <property type="gene ID" value="ENSG00000120616.16"/>
</dbReference>
<dbReference type="GeneID" id="80314"/>
<dbReference type="KEGG" id="hsa:80314"/>
<dbReference type="MANE-Select" id="ENST00000319778.11">
    <molecule id="Q9H2F5-2"/>
    <property type="protein sequence ID" value="ENSP00000318559.6"/>
    <property type="RefSeq nucleotide sequence ID" value="NM_001272004.3"/>
    <property type="RefSeq protein sequence ID" value="NP_001258933.1"/>
</dbReference>
<dbReference type="UCSC" id="uc001iwg.3">
    <molecule id="Q9H2F5-1"/>
    <property type="organism name" value="human"/>
</dbReference>
<dbReference type="AGR" id="HGNC:19876"/>
<dbReference type="CTD" id="80314"/>
<dbReference type="DisGeNET" id="80314"/>
<dbReference type="GeneCards" id="EPC1"/>
<dbReference type="HGNC" id="HGNC:19876">
    <property type="gene designation" value="EPC1"/>
</dbReference>
<dbReference type="HPA" id="ENSG00000120616">
    <property type="expression patterns" value="Tissue enriched (bone)"/>
</dbReference>
<dbReference type="MalaCards" id="EPC1"/>
<dbReference type="MIM" id="610999">
    <property type="type" value="gene"/>
</dbReference>
<dbReference type="neXtProt" id="NX_Q9H2F5"/>
<dbReference type="OpenTargets" id="ENSG00000120616"/>
<dbReference type="PharmGKB" id="PA134981141"/>
<dbReference type="VEuPathDB" id="HostDB:ENSG00000120616"/>
<dbReference type="eggNOG" id="KOG2261">
    <property type="taxonomic scope" value="Eukaryota"/>
</dbReference>
<dbReference type="GeneTree" id="ENSGT00940000155003"/>
<dbReference type="HOGENOM" id="CLU_012781_0_0_1"/>
<dbReference type="InParanoid" id="Q9H2F5"/>
<dbReference type="OMA" id="RPKRRYE"/>
<dbReference type="OrthoDB" id="435275at2759"/>
<dbReference type="PAN-GO" id="Q9H2F5">
    <property type="GO annotations" value="2 GO annotations based on evolutionary models"/>
</dbReference>
<dbReference type="PhylomeDB" id="Q9H2F5"/>
<dbReference type="TreeFam" id="TF106438"/>
<dbReference type="PathwayCommons" id="Q9H2F5"/>
<dbReference type="Reactome" id="R-HSA-3214847">
    <property type="pathway name" value="HATs acetylate histones"/>
</dbReference>
<dbReference type="Reactome" id="R-HSA-8953750">
    <property type="pathway name" value="Transcriptional Regulation by E2F6"/>
</dbReference>
<dbReference type="SignaLink" id="Q9H2F5"/>
<dbReference type="SIGNOR" id="Q9H2F5"/>
<dbReference type="BioGRID-ORCS" id="80314">
    <property type="hits" value="78 hits in 1162 CRISPR screens"/>
</dbReference>
<dbReference type="ChiTaRS" id="EPC1">
    <property type="organism name" value="human"/>
</dbReference>
<dbReference type="GeneWiki" id="EPC1"/>
<dbReference type="GenomeRNAi" id="80314"/>
<dbReference type="Pharos" id="Q9H2F5">
    <property type="development level" value="Tbio"/>
</dbReference>
<dbReference type="PRO" id="PR:Q9H2F5"/>
<dbReference type="Proteomes" id="UP000005640">
    <property type="component" value="Chromosome 10"/>
</dbReference>
<dbReference type="RNAct" id="Q9H2F5">
    <property type="molecule type" value="protein"/>
</dbReference>
<dbReference type="Bgee" id="ENSG00000120616">
    <property type="expression patterns" value="Expressed in colonic epithelium and 199 other cell types or tissues"/>
</dbReference>
<dbReference type="ExpressionAtlas" id="Q9H2F5">
    <property type="expression patterns" value="baseline and differential"/>
</dbReference>
<dbReference type="GO" id="GO:0005737">
    <property type="term" value="C:cytoplasm"/>
    <property type="evidence" value="ECO:0007669"/>
    <property type="project" value="UniProtKB-SubCell"/>
</dbReference>
<dbReference type="GO" id="GO:0035267">
    <property type="term" value="C:NuA4 histone acetyltransferase complex"/>
    <property type="evidence" value="ECO:0000314"/>
    <property type="project" value="UniProtKB"/>
</dbReference>
<dbReference type="GO" id="GO:0016604">
    <property type="term" value="C:nuclear body"/>
    <property type="evidence" value="ECO:0000314"/>
    <property type="project" value="HPA"/>
</dbReference>
<dbReference type="GO" id="GO:0031965">
    <property type="term" value="C:nuclear membrane"/>
    <property type="evidence" value="ECO:0000314"/>
    <property type="project" value="MGI"/>
</dbReference>
<dbReference type="GO" id="GO:0005730">
    <property type="term" value="C:nucleolus"/>
    <property type="evidence" value="ECO:0000314"/>
    <property type="project" value="HPA"/>
</dbReference>
<dbReference type="GO" id="GO:0005654">
    <property type="term" value="C:nucleoplasm"/>
    <property type="evidence" value="ECO:0000314"/>
    <property type="project" value="HPA"/>
</dbReference>
<dbReference type="GO" id="GO:0000786">
    <property type="term" value="C:nucleosome"/>
    <property type="evidence" value="ECO:0000314"/>
    <property type="project" value="ComplexPortal"/>
</dbReference>
<dbReference type="GO" id="GO:0005634">
    <property type="term" value="C:nucleus"/>
    <property type="evidence" value="ECO:0000314"/>
    <property type="project" value="UniProtKB"/>
</dbReference>
<dbReference type="GO" id="GO:0032777">
    <property type="term" value="C:piccolo histone acetyltransferase complex"/>
    <property type="evidence" value="ECO:0000314"/>
    <property type="project" value="UniProtKB"/>
</dbReference>
<dbReference type="GO" id="GO:0035861">
    <property type="term" value="C:site of double-strand break"/>
    <property type="evidence" value="ECO:0000314"/>
    <property type="project" value="UniProt"/>
</dbReference>
<dbReference type="GO" id="GO:0140463">
    <property type="term" value="F:chromatin-protein adaptor activity"/>
    <property type="evidence" value="ECO:0000314"/>
    <property type="project" value="UniProtKB"/>
</dbReference>
<dbReference type="GO" id="GO:0140767">
    <property type="term" value="F:enzyme-substrate adaptor activity"/>
    <property type="evidence" value="ECO:0000314"/>
    <property type="project" value="GO_Central"/>
</dbReference>
<dbReference type="GO" id="GO:0006351">
    <property type="term" value="P:DNA-templated transcription"/>
    <property type="evidence" value="ECO:0000304"/>
    <property type="project" value="UniProtKB"/>
</dbReference>
<dbReference type="GO" id="GO:0000724">
    <property type="term" value="P:double-strand break repair via homologous recombination"/>
    <property type="evidence" value="ECO:0000314"/>
    <property type="project" value="UniProtKB"/>
</dbReference>
<dbReference type="GO" id="GO:0045892">
    <property type="term" value="P:negative regulation of DNA-templated transcription"/>
    <property type="evidence" value="ECO:0000314"/>
    <property type="project" value="UniProtKB"/>
</dbReference>
<dbReference type="GO" id="GO:0045814">
    <property type="term" value="P:negative regulation of gene expression, epigenetic"/>
    <property type="evidence" value="ECO:0000314"/>
    <property type="project" value="MGI"/>
</dbReference>
<dbReference type="GO" id="GO:0000122">
    <property type="term" value="P:negative regulation of transcription by RNA polymerase II"/>
    <property type="evidence" value="ECO:0000314"/>
    <property type="project" value="MGI"/>
</dbReference>
<dbReference type="GO" id="GO:0045893">
    <property type="term" value="P:positive regulation of DNA-templated transcription"/>
    <property type="evidence" value="ECO:0000304"/>
    <property type="project" value="UniProtKB"/>
</dbReference>
<dbReference type="GO" id="GO:1905168">
    <property type="term" value="P:positive regulation of double-strand break repair via homologous recombination"/>
    <property type="evidence" value="ECO:0000314"/>
    <property type="project" value="ComplexPortal"/>
</dbReference>
<dbReference type="GO" id="GO:0045944">
    <property type="term" value="P:positive regulation of transcription by RNA polymerase II"/>
    <property type="evidence" value="ECO:0000314"/>
    <property type="project" value="MGI"/>
</dbReference>
<dbReference type="GO" id="GO:0042981">
    <property type="term" value="P:regulation of apoptotic process"/>
    <property type="evidence" value="ECO:0000303"/>
    <property type="project" value="ComplexPortal"/>
</dbReference>
<dbReference type="GO" id="GO:0051726">
    <property type="term" value="P:regulation of cell cycle"/>
    <property type="evidence" value="ECO:0000315"/>
    <property type="project" value="ComplexPortal"/>
</dbReference>
<dbReference type="GO" id="GO:2000779">
    <property type="term" value="P:regulation of double-strand break repair"/>
    <property type="evidence" value="ECO:0000303"/>
    <property type="project" value="ComplexPortal"/>
</dbReference>
<dbReference type="GO" id="GO:0006357">
    <property type="term" value="P:regulation of transcription by RNA polymerase II"/>
    <property type="evidence" value="ECO:0000318"/>
    <property type="project" value="GO_Central"/>
</dbReference>
<dbReference type="GO" id="GO:0035092">
    <property type="term" value="P:sperm DNA condensation"/>
    <property type="evidence" value="ECO:0000315"/>
    <property type="project" value="GO_Central"/>
</dbReference>
<dbReference type="GO" id="GO:0007286">
    <property type="term" value="P:spermatid development"/>
    <property type="evidence" value="ECO:0000315"/>
    <property type="project" value="GO_Central"/>
</dbReference>
<dbReference type="InterPro" id="IPR024943">
    <property type="entry name" value="Enhancer_polycomb"/>
</dbReference>
<dbReference type="InterPro" id="IPR019542">
    <property type="entry name" value="Enhancer_polycomb-like_N"/>
</dbReference>
<dbReference type="InterPro" id="IPR009607">
    <property type="entry name" value="Enhancer_polycomb_C"/>
</dbReference>
<dbReference type="PANTHER" id="PTHR14898">
    <property type="entry name" value="ENHANCER OF POLYCOMB"/>
    <property type="match status" value="1"/>
</dbReference>
<dbReference type="Pfam" id="PF06752">
    <property type="entry name" value="E_Pc_C"/>
    <property type="match status" value="1"/>
</dbReference>
<dbReference type="Pfam" id="PF10513">
    <property type="entry name" value="EPL1"/>
    <property type="match status" value="1"/>
</dbReference>
<sequence>MSKLSFRARALDASKPLPVFRCEDLPDLHEYASINRAVPQMPTGMEKEEESEHHLQRAISAQQVYGEKRDNMVIPVPEAESNIAYYESIYPGEFKMPKQLIHIQPFSLDAEQPDYDLDSEDEVFVNKLKKKMDICPLQFEEMIDRLEKGSGQQPVSLQEAKLLLKEDDELIREVYEYWIKKRKNCRGPSLIPSVKQEKRDGSSTNDPYVAFRRRTEKMQTRKNRKNDEASYEKMLKLRRDLSRAVTILEMIKRREKSKRELLHLTLEIMEKRYNLGDYNGEIMSEVMAQRQPMKPTYAIPIIPITNSSQFKHQEAMDVKEFKVNKQDKADLIRPKRKYEKKPKVLPSSAAATPQQTSPAALPVFNAKDLNQYDFPSSDEEPLSQVLSGSSEAEEDNDPDGPFAFRRKAGCQYYAPHLDQTGNWPWTSPKDGGLGDVRYRYCLTTLTVPQRCIGFARRRVGRGGRVLLDRAHSDYDSVFHHLDLEMLSSPQHSPVNQFANTSETNTSDKSFSKDLSQILVNIKSCRWRHFRPRTPSLHDSDNDELSCRKLYRSINRTGTAQPGTQTCSTSTQSKSSSGSAHFAFTAEQYQQHQQQLALMQKQQLAQIQQQQANSNSSTNTSQNLASNQQKSGFRLNIQGLERTLQGFVSKTLDSASAQFAASALVTSEQLMGFKMKDDVVLGIGVNGVLPASGVYKGLHLSSTTPTALVHTSPSTAGSALLQPSNITQTSSSHSALSHQVTAANSATTQVLIGNNIRLTVPSSVATVNSIAPINARHIPRTLSAVPSSALKLAAAANCQVSKVPSSSSVDSVPRENHESEKPALNNIADNTVAMEVT</sequence>
<proteinExistence type="evidence at protein level"/>